<evidence type="ECO:0000255" key="1">
    <source>
        <dbReference type="HAMAP-Rule" id="MF_00238"/>
    </source>
</evidence>
<organism>
    <name type="scientific">Borreliella afzelii (strain PKo)</name>
    <name type="common">Borrelia afzelii</name>
    <dbReference type="NCBI Taxonomy" id="390236"/>
    <lineage>
        <taxon>Bacteria</taxon>
        <taxon>Pseudomonadati</taxon>
        <taxon>Spirochaetota</taxon>
        <taxon>Spirochaetia</taxon>
        <taxon>Spirochaetales</taxon>
        <taxon>Borreliaceae</taxon>
        <taxon>Borreliella</taxon>
    </lineage>
</organism>
<dbReference type="EC" id="2.7.4.25" evidence="1"/>
<dbReference type="EMBL" id="CP000395">
    <property type="protein sequence ID" value="ABH01393.1"/>
    <property type="molecule type" value="Genomic_DNA"/>
</dbReference>
<dbReference type="EMBL" id="CP002933">
    <property type="protein sequence ID" value="AEL69359.1"/>
    <property type="molecule type" value="Genomic_DNA"/>
</dbReference>
<dbReference type="RefSeq" id="WP_011600843.1">
    <property type="nucleotide sequence ID" value="NC_008277.1"/>
</dbReference>
<dbReference type="SMR" id="Q0SP35"/>
<dbReference type="STRING" id="29518.BLA32_03650"/>
<dbReference type="KEGG" id="baf:BAPKO_0130"/>
<dbReference type="KEGG" id="bafz:BafPKo_0126"/>
<dbReference type="PATRIC" id="fig|390236.22.peg.125"/>
<dbReference type="eggNOG" id="COG0283">
    <property type="taxonomic scope" value="Bacteria"/>
</dbReference>
<dbReference type="HOGENOM" id="CLU_079959_0_2_12"/>
<dbReference type="OrthoDB" id="9807434at2"/>
<dbReference type="Proteomes" id="UP000005216">
    <property type="component" value="Chromosome"/>
</dbReference>
<dbReference type="GO" id="GO:0005737">
    <property type="term" value="C:cytoplasm"/>
    <property type="evidence" value="ECO:0007669"/>
    <property type="project" value="UniProtKB-SubCell"/>
</dbReference>
<dbReference type="GO" id="GO:0005524">
    <property type="term" value="F:ATP binding"/>
    <property type="evidence" value="ECO:0007669"/>
    <property type="project" value="UniProtKB-UniRule"/>
</dbReference>
<dbReference type="GO" id="GO:0036430">
    <property type="term" value="F:CMP kinase activity"/>
    <property type="evidence" value="ECO:0007669"/>
    <property type="project" value="RHEA"/>
</dbReference>
<dbReference type="GO" id="GO:0036431">
    <property type="term" value="F:dCMP kinase activity"/>
    <property type="evidence" value="ECO:0007669"/>
    <property type="project" value="RHEA"/>
</dbReference>
<dbReference type="GO" id="GO:0006220">
    <property type="term" value="P:pyrimidine nucleotide metabolic process"/>
    <property type="evidence" value="ECO:0007669"/>
    <property type="project" value="UniProtKB-UniRule"/>
</dbReference>
<dbReference type="CDD" id="cd02020">
    <property type="entry name" value="CMPK"/>
    <property type="match status" value="1"/>
</dbReference>
<dbReference type="Gene3D" id="3.40.50.300">
    <property type="entry name" value="P-loop containing nucleotide triphosphate hydrolases"/>
    <property type="match status" value="1"/>
</dbReference>
<dbReference type="HAMAP" id="MF_00238">
    <property type="entry name" value="Cytidyl_kinase_type1"/>
    <property type="match status" value="1"/>
</dbReference>
<dbReference type="InterPro" id="IPR003136">
    <property type="entry name" value="Cytidylate_kin"/>
</dbReference>
<dbReference type="InterPro" id="IPR011994">
    <property type="entry name" value="Cytidylate_kinase_dom"/>
</dbReference>
<dbReference type="InterPro" id="IPR027417">
    <property type="entry name" value="P-loop_NTPase"/>
</dbReference>
<dbReference type="NCBIfam" id="TIGR00017">
    <property type="entry name" value="cmk"/>
    <property type="match status" value="1"/>
</dbReference>
<dbReference type="Pfam" id="PF02224">
    <property type="entry name" value="Cytidylate_kin"/>
    <property type="match status" value="1"/>
</dbReference>
<dbReference type="SUPFAM" id="SSF52540">
    <property type="entry name" value="P-loop containing nucleoside triphosphate hydrolases"/>
    <property type="match status" value="1"/>
</dbReference>
<reference key="1">
    <citation type="journal article" date="2006" name="BMC Genomics">
        <title>Comparative genome analysis: selection pressure on the Borrelia vls cassettes is essential for infectivity.</title>
        <authorList>
            <person name="Gloeckner G."/>
            <person name="Schulte-Spechtel U."/>
            <person name="Schilhabel M."/>
            <person name="Felder M."/>
            <person name="Suehnel J."/>
            <person name="Wilske B."/>
            <person name="Platzer M."/>
        </authorList>
    </citation>
    <scope>NUCLEOTIDE SEQUENCE [LARGE SCALE GENOMIC DNA]</scope>
    <source>
        <strain>PKo</strain>
    </source>
</reference>
<reference key="2">
    <citation type="journal article" date="2011" name="J. Bacteriol.">
        <title>Whole-genome sequences of two Borrelia afzelii and two Borrelia garinii Lyme disease agent isolates.</title>
        <authorList>
            <person name="Casjens S.R."/>
            <person name="Mongodin E.F."/>
            <person name="Qiu W.G."/>
            <person name="Dunn J.J."/>
            <person name="Luft B.J."/>
            <person name="Fraser-Liggett C.M."/>
            <person name="Schutzer S.E."/>
        </authorList>
    </citation>
    <scope>NUCLEOTIDE SEQUENCE [LARGE SCALE GENOMIC DNA]</scope>
    <source>
        <strain>PKo</strain>
    </source>
</reference>
<accession>Q0SP35</accession>
<accession>G0IQX3</accession>
<sequence length="221" mass="25513">MIIAIDGPSASGKSSIARELSVKLGFKFISSGYLYRIITLIAQRSFISGCDFISENRLLNLVLENDISFNDSSFLLNGENVENQILNDKIDFQVSFYSSYIGIRNIVNKKLREVVKFSDDNYIIEGRDITTIVFPESEFKIYLDASIKVRALRRYKQRNGNETLEELERTLKIRDDVDKNKQYGKLELSKGVFYLDTSYKGLDDVCNIIIEKFNLKKVRER</sequence>
<proteinExistence type="inferred from homology"/>
<gene>
    <name evidence="1" type="primary">cmk1</name>
    <name type="ordered locus">BAPKO_0130</name>
    <name type="ordered locus">BafPKo_0126</name>
</gene>
<keyword id="KW-0067">ATP-binding</keyword>
<keyword id="KW-0963">Cytoplasm</keyword>
<keyword id="KW-0418">Kinase</keyword>
<keyword id="KW-0547">Nucleotide-binding</keyword>
<keyword id="KW-0808">Transferase</keyword>
<name>KCY1_BORAP</name>
<feature type="chain" id="PRO_1000048188" description="Cytidylate kinase 1">
    <location>
        <begin position="1"/>
        <end position="221"/>
    </location>
</feature>
<feature type="binding site" evidence="1">
    <location>
        <begin position="7"/>
        <end position="15"/>
    </location>
    <ligand>
        <name>ATP</name>
        <dbReference type="ChEBI" id="CHEBI:30616"/>
    </ligand>
</feature>
<comment type="catalytic activity">
    <reaction evidence="1">
        <text>CMP + ATP = CDP + ADP</text>
        <dbReference type="Rhea" id="RHEA:11600"/>
        <dbReference type="ChEBI" id="CHEBI:30616"/>
        <dbReference type="ChEBI" id="CHEBI:58069"/>
        <dbReference type="ChEBI" id="CHEBI:60377"/>
        <dbReference type="ChEBI" id="CHEBI:456216"/>
        <dbReference type="EC" id="2.7.4.25"/>
    </reaction>
</comment>
<comment type="catalytic activity">
    <reaction evidence="1">
        <text>dCMP + ATP = dCDP + ADP</text>
        <dbReference type="Rhea" id="RHEA:25094"/>
        <dbReference type="ChEBI" id="CHEBI:30616"/>
        <dbReference type="ChEBI" id="CHEBI:57566"/>
        <dbReference type="ChEBI" id="CHEBI:58593"/>
        <dbReference type="ChEBI" id="CHEBI:456216"/>
        <dbReference type="EC" id="2.7.4.25"/>
    </reaction>
</comment>
<comment type="subcellular location">
    <subcellularLocation>
        <location evidence="1">Cytoplasm</location>
    </subcellularLocation>
</comment>
<comment type="similarity">
    <text evidence="1">Belongs to the cytidylate kinase family. Type 1 subfamily.</text>
</comment>
<protein>
    <recommendedName>
        <fullName evidence="1">Cytidylate kinase 1</fullName>
        <shortName evidence="1">CK 1</shortName>
        <ecNumber evidence="1">2.7.4.25</ecNumber>
    </recommendedName>
    <alternativeName>
        <fullName evidence="1">Cytidine monophosphate kinase 1</fullName>
        <shortName evidence="1">CMP kinase 1</shortName>
    </alternativeName>
</protein>